<accession>Q4URE8</accession>
<organism>
    <name type="scientific">Xanthomonas campestris pv. campestris (strain 8004)</name>
    <dbReference type="NCBI Taxonomy" id="314565"/>
    <lineage>
        <taxon>Bacteria</taxon>
        <taxon>Pseudomonadati</taxon>
        <taxon>Pseudomonadota</taxon>
        <taxon>Gammaproteobacteria</taxon>
        <taxon>Lysobacterales</taxon>
        <taxon>Lysobacteraceae</taxon>
        <taxon>Xanthomonas</taxon>
    </lineage>
</organism>
<comment type="function">
    <text evidence="1">One of the primary rRNA binding proteins, it binds specifically to the 5'-end of 16S ribosomal RNA.</text>
</comment>
<comment type="subunit">
    <text evidence="1">Part of the 30S ribosomal subunit.</text>
</comment>
<comment type="similarity">
    <text evidence="1">Belongs to the universal ribosomal protein uS17 family.</text>
</comment>
<reference key="1">
    <citation type="journal article" date="2005" name="Genome Res.">
        <title>Comparative and functional genomic analyses of the pathogenicity of phytopathogen Xanthomonas campestris pv. campestris.</title>
        <authorList>
            <person name="Qian W."/>
            <person name="Jia Y."/>
            <person name="Ren S.-X."/>
            <person name="He Y.-Q."/>
            <person name="Feng J.-X."/>
            <person name="Lu L.-F."/>
            <person name="Sun Q."/>
            <person name="Ying G."/>
            <person name="Tang D.-J."/>
            <person name="Tang H."/>
            <person name="Wu W."/>
            <person name="Hao P."/>
            <person name="Wang L."/>
            <person name="Jiang B.-L."/>
            <person name="Zeng S."/>
            <person name="Gu W.-Y."/>
            <person name="Lu G."/>
            <person name="Rong L."/>
            <person name="Tian Y."/>
            <person name="Yao Z."/>
            <person name="Fu G."/>
            <person name="Chen B."/>
            <person name="Fang R."/>
            <person name="Qiang B."/>
            <person name="Chen Z."/>
            <person name="Zhao G.-P."/>
            <person name="Tang J.-L."/>
            <person name="He C."/>
        </authorList>
    </citation>
    <scope>NUCLEOTIDE SEQUENCE [LARGE SCALE GENOMIC DNA]</scope>
    <source>
        <strain>8004</strain>
    </source>
</reference>
<protein>
    <recommendedName>
        <fullName evidence="1">Small ribosomal subunit protein uS17</fullName>
    </recommendedName>
    <alternativeName>
        <fullName evidence="2">30S ribosomal protein S17</fullName>
    </alternativeName>
</protein>
<sequence length="89" mass="10092">MSDNNEKQTLRTVEGRVVSNKMDKTVTVLVERQVKHPLYGKYIKRSSKLHAHDADNACNEGDVVRVTEIAPMSKTKNWRVVEIVTRAAV</sequence>
<dbReference type="EMBL" id="CP000050">
    <property type="protein sequence ID" value="AAY50375.1"/>
    <property type="molecule type" value="Genomic_DNA"/>
</dbReference>
<dbReference type="RefSeq" id="WP_011036129.1">
    <property type="nucleotide sequence ID" value="NZ_CP155948.1"/>
</dbReference>
<dbReference type="SMR" id="Q4URE8"/>
<dbReference type="GeneID" id="58014520"/>
<dbReference type="KEGG" id="xcb:XC_3331"/>
<dbReference type="HOGENOM" id="CLU_073626_1_1_6"/>
<dbReference type="Proteomes" id="UP000000420">
    <property type="component" value="Chromosome"/>
</dbReference>
<dbReference type="GO" id="GO:0022627">
    <property type="term" value="C:cytosolic small ribosomal subunit"/>
    <property type="evidence" value="ECO:0007669"/>
    <property type="project" value="TreeGrafter"/>
</dbReference>
<dbReference type="GO" id="GO:0019843">
    <property type="term" value="F:rRNA binding"/>
    <property type="evidence" value="ECO:0007669"/>
    <property type="project" value="UniProtKB-UniRule"/>
</dbReference>
<dbReference type="GO" id="GO:0003735">
    <property type="term" value="F:structural constituent of ribosome"/>
    <property type="evidence" value="ECO:0007669"/>
    <property type="project" value="InterPro"/>
</dbReference>
<dbReference type="GO" id="GO:0006412">
    <property type="term" value="P:translation"/>
    <property type="evidence" value="ECO:0007669"/>
    <property type="project" value="UniProtKB-UniRule"/>
</dbReference>
<dbReference type="CDD" id="cd00364">
    <property type="entry name" value="Ribosomal_uS17"/>
    <property type="match status" value="1"/>
</dbReference>
<dbReference type="FunFam" id="2.40.50.140:FF:000204">
    <property type="entry name" value="30S ribosomal protein S17"/>
    <property type="match status" value="1"/>
</dbReference>
<dbReference type="Gene3D" id="2.40.50.140">
    <property type="entry name" value="Nucleic acid-binding proteins"/>
    <property type="match status" value="1"/>
</dbReference>
<dbReference type="HAMAP" id="MF_01345_B">
    <property type="entry name" value="Ribosomal_uS17_B"/>
    <property type="match status" value="1"/>
</dbReference>
<dbReference type="InterPro" id="IPR012340">
    <property type="entry name" value="NA-bd_OB-fold"/>
</dbReference>
<dbReference type="InterPro" id="IPR000266">
    <property type="entry name" value="Ribosomal_uS17"/>
</dbReference>
<dbReference type="InterPro" id="IPR019984">
    <property type="entry name" value="Ribosomal_uS17_bact/chlr"/>
</dbReference>
<dbReference type="NCBIfam" id="NF004123">
    <property type="entry name" value="PRK05610.1"/>
    <property type="match status" value="1"/>
</dbReference>
<dbReference type="NCBIfam" id="TIGR03635">
    <property type="entry name" value="uS17_bact"/>
    <property type="match status" value="1"/>
</dbReference>
<dbReference type="PANTHER" id="PTHR10744">
    <property type="entry name" value="40S RIBOSOMAL PROTEIN S11 FAMILY MEMBER"/>
    <property type="match status" value="1"/>
</dbReference>
<dbReference type="PANTHER" id="PTHR10744:SF1">
    <property type="entry name" value="SMALL RIBOSOMAL SUBUNIT PROTEIN US17M"/>
    <property type="match status" value="1"/>
</dbReference>
<dbReference type="Pfam" id="PF00366">
    <property type="entry name" value="Ribosomal_S17"/>
    <property type="match status" value="1"/>
</dbReference>
<dbReference type="PRINTS" id="PR00973">
    <property type="entry name" value="RIBOSOMALS17"/>
</dbReference>
<dbReference type="SUPFAM" id="SSF50249">
    <property type="entry name" value="Nucleic acid-binding proteins"/>
    <property type="match status" value="1"/>
</dbReference>
<proteinExistence type="inferred from homology"/>
<feature type="chain" id="PRO_0000233614" description="Small ribosomal subunit protein uS17">
    <location>
        <begin position="1"/>
        <end position="89"/>
    </location>
</feature>
<gene>
    <name evidence="1" type="primary">rpsQ</name>
    <name type="ordered locus">XC_3331</name>
</gene>
<evidence type="ECO:0000255" key="1">
    <source>
        <dbReference type="HAMAP-Rule" id="MF_01345"/>
    </source>
</evidence>
<evidence type="ECO:0000305" key="2"/>
<name>RS17_XANC8</name>
<keyword id="KW-0687">Ribonucleoprotein</keyword>
<keyword id="KW-0689">Ribosomal protein</keyword>
<keyword id="KW-0694">RNA-binding</keyword>
<keyword id="KW-0699">rRNA-binding</keyword>